<sequence length="212" mass="23682">MESALTVLSGWGWPVEVVTGPVADHLTEMRPPAPTGTTCTTTSTPTPLCVPDLSVESIKGLAPDGENANYVGFDTMFMVSSIDELGRRQLTDTIRKDLRVTLAKFTIACTKTSSFSSASSTRRRKRHCPSSERVMRSNKSLQMFVLCRRAHAKQIRDQLQSVIQARKPRKYYTRSSDGRTHPVVPVYIYEFSAVDKVYLHRDNVIEADAQAK</sequence>
<organismHost>
    <name type="scientific">Equus caballus</name>
    <name type="common">Horse</name>
    <dbReference type="NCBI Taxonomy" id="9796"/>
</organismHost>
<comment type="subcellular location">
    <subcellularLocation>
        <location evidence="1">Host nucleus</location>
    </subcellularLocation>
</comment>
<comment type="PTM">
    <text evidence="1">Phosphorylated.</text>
</comment>
<comment type="similarity">
    <text evidence="2">Belongs to the alphaherpesvirinae HHV-1 UL3 family.</text>
</comment>
<feature type="chain" id="PRO_0000115896" description="Nuclear phosphoprotein UL3 homolog">
    <location>
        <begin position="1"/>
        <end position="212"/>
    </location>
</feature>
<proteinExistence type="inferred from homology"/>
<gene>
    <name type="ordered locus">60</name>
</gene>
<protein>
    <recommendedName>
        <fullName>Nuclear phosphoprotein UL3 homolog</fullName>
    </recommendedName>
    <alternativeName>
        <fullName>ORF60 protein</fullName>
    </alternativeName>
</protein>
<name>NP03_EHV1V</name>
<keyword id="KW-1048">Host nucleus</keyword>
<keyword id="KW-0597">Phosphoprotein</keyword>
<organism>
    <name type="scientific">Equine herpesvirus 1 (strain V592)</name>
    <name type="common">EHV-1</name>
    <name type="synonym">Equine abortion virus</name>
    <dbReference type="NCBI Taxonomy" id="310273"/>
    <lineage>
        <taxon>Viruses</taxon>
        <taxon>Duplodnaviria</taxon>
        <taxon>Heunggongvirae</taxon>
        <taxon>Peploviricota</taxon>
        <taxon>Herviviricetes</taxon>
        <taxon>Herpesvirales</taxon>
        <taxon>Orthoherpesviridae</taxon>
        <taxon>Alphaherpesvirinae</taxon>
        <taxon>Varicellovirus</taxon>
        <taxon>Varicellovirus equidalpha1</taxon>
        <taxon>Equid alphaherpesvirus 1</taxon>
    </lineage>
</organism>
<dbReference type="EMBL" id="AY464052">
    <property type="protein sequence ID" value="AAS45944.1"/>
    <property type="molecule type" value="Genomic_DNA"/>
</dbReference>
<dbReference type="KEGG" id="vg:2948562"/>
<dbReference type="Proteomes" id="UP000008296">
    <property type="component" value="Segment"/>
</dbReference>
<dbReference type="GO" id="GO:0042025">
    <property type="term" value="C:host cell nucleus"/>
    <property type="evidence" value="ECO:0007669"/>
    <property type="project" value="UniProtKB-SubCell"/>
</dbReference>
<dbReference type="InterPro" id="IPR005035">
    <property type="entry name" value="Herpes_UL3"/>
</dbReference>
<dbReference type="Pfam" id="PF03369">
    <property type="entry name" value="Herpes_UL3"/>
    <property type="match status" value="1"/>
</dbReference>
<reference evidence="2 3" key="1">
    <citation type="submission" date="2003-11" db="EMBL/GenBank/DDBJ databases">
        <authorList>
            <person name="Davis-Poynter N."/>
            <person name="Nugent J."/>
            <person name="Birch-Machin I."/>
            <person name="Allen G.P."/>
        </authorList>
    </citation>
    <scope>NUCLEOTIDE SEQUENCE [LARGE SCALE GENOMIC DNA]</scope>
</reference>
<accession>P84456</accession>
<accession>Q6S6U4</accession>
<evidence type="ECO:0000250" key="1"/>
<evidence type="ECO:0000305" key="2"/>
<evidence type="ECO:0000312" key="3">
    <source>
        <dbReference type="EMBL" id="AAS45944.1"/>
    </source>
</evidence>